<protein>
    <recommendedName>
        <fullName evidence="1">ATP synthase subunit a</fullName>
    </recommendedName>
    <alternativeName>
        <fullName evidence="1">ATP synthase F0 sector subunit a</fullName>
    </alternativeName>
    <alternativeName>
        <fullName evidence="1">F-ATPase subunit 6</fullName>
    </alternativeName>
</protein>
<evidence type="ECO:0000255" key="1">
    <source>
        <dbReference type="HAMAP-Rule" id="MF_01393"/>
    </source>
</evidence>
<name>ATP6_WOLPM</name>
<keyword id="KW-0066">ATP synthesis</keyword>
<keyword id="KW-1003">Cell membrane</keyword>
<keyword id="KW-0138">CF(0)</keyword>
<keyword id="KW-0375">Hydrogen ion transport</keyword>
<keyword id="KW-0406">Ion transport</keyword>
<keyword id="KW-0472">Membrane</keyword>
<keyword id="KW-0812">Transmembrane</keyword>
<keyword id="KW-1133">Transmembrane helix</keyword>
<keyword id="KW-0813">Transport</keyword>
<gene>
    <name evidence="1" type="primary">atpB</name>
    <name type="ordered locus">WD_0427</name>
</gene>
<reference key="1">
    <citation type="journal article" date="2004" name="PLoS Biol.">
        <title>Phylogenomics of the reproductive parasite Wolbachia pipientis wMel: a streamlined genome overrun by mobile genetic elements.</title>
        <authorList>
            <person name="Wu M."/>
            <person name="Sun L.V."/>
            <person name="Vamathevan J.J."/>
            <person name="Riegler M."/>
            <person name="DeBoy R.T."/>
            <person name="Brownlie J.C."/>
            <person name="McGraw E.A."/>
            <person name="Martin W."/>
            <person name="Esser C."/>
            <person name="Ahmadinejad N."/>
            <person name="Wiegand C."/>
            <person name="Madupu R."/>
            <person name="Beanan M.J."/>
            <person name="Brinkac L.M."/>
            <person name="Daugherty S.C."/>
            <person name="Durkin A.S."/>
            <person name="Kolonay J.F."/>
            <person name="Nelson W.C."/>
            <person name="Mohamoud Y."/>
            <person name="Lee P."/>
            <person name="Berry K.J."/>
            <person name="Young M.B."/>
            <person name="Utterback T.R."/>
            <person name="Weidman J.F."/>
            <person name="Nierman W.C."/>
            <person name="Paulsen I.T."/>
            <person name="Nelson K.E."/>
            <person name="Tettelin H."/>
            <person name="O'Neill S.L."/>
            <person name="Eisen J.A."/>
        </authorList>
    </citation>
    <scope>NUCLEOTIDE SEQUENCE [LARGE SCALE GENOMIC DNA]</scope>
</reference>
<comment type="function">
    <text evidence="1">Key component of the proton channel; it plays a direct role in the translocation of protons across the membrane.</text>
</comment>
<comment type="subunit">
    <text evidence="1">F-type ATPases have 2 components, CF(1) - the catalytic core - and CF(0) - the membrane proton channel. CF(1) has five subunits: alpha(3), beta(3), gamma(1), delta(1), epsilon(1). CF(0) has three main subunits: a(1), b(2) and c(9-12). The alpha and beta chains form an alternating ring which encloses part of the gamma chain. CF(1) is attached to CF(0) by a central stalk formed by the gamma and epsilon chains, while a peripheral stalk is formed by the delta and b chains.</text>
</comment>
<comment type="subcellular location">
    <subcellularLocation>
        <location evidence="1">Cell membrane</location>
        <topology evidence="1">Multi-pass membrane protein</topology>
    </subcellularLocation>
</comment>
<comment type="similarity">
    <text evidence="1">Belongs to the ATPase A chain family.</text>
</comment>
<sequence>MALNPLEQFKVYTIIELPRLFGYDVSFTNSSFFTMISVILMILFLLFGIKKGSVIPGYLQAAVEYVYDFVISIIENNTGSKGLQHIPLIFTVFIFILSCNLVGVLPYSFTVTSHVIVTFALSMVVFIYITIVGFKEREVEFLRILLPKGTPSWLAPIIIIIKLFAYLVRPVSLSIRLAANMIAGHTIIKVIAGFIVNMNIFFTPAPFLFIIALIGFEVFVAILQAYIFTILTCVYLSDAVK</sequence>
<proteinExistence type="inferred from homology"/>
<feature type="chain" id="PRO_0000362508" description="ATP synthase subunit a">
    <location>
        <begin position="1"/>
        <end position="241"/>
    </location>
</feature>
<feature type="transmembrane region" description="Helical" evidence="1">
    <location>
        <begin position="29"/>
        <end position="49"/>
    </location>
</feature>
<feature type="transmembrane region" description="Helical" evidence="1">
    <location>
        <begin position="54"/>
        <end position="74"/>
    </location>
</feature>
<feature type="transmembrane region" description="Helical" evidence="1">
    <location>
        <begin position="86"/>
        <end position="106"/>
    </location>
</feature>
<feature type="transmembrane region" description="Helical" evidence="1">
    <location>
        <begin position="114"/>
        <end position="134"/>
    </location>
</feature>
<feature type="transmembrane region" description="Helical" evidence="1">
    <location>
        <begin position="153"/>
        <end position="173"/>
    </location>
</feature>
<feature type="transmembrane region" description="Helical" evidence="1">
    <location>
        <begin position="177"/>
        <end position="197"/>
    </location>
</feature>
<feature type="transmembrane region" description="Helical" evidence="1">
    <location>
        <begin position="200"/>
        <end position="220"/>
    </location>
</feature>
<feature type="transmembrane region" description="Helical" evidence="1">
    <location>
        <begin position="221"/>
        <end position="241"/>
    </location>
</feature>
<organism>
    <name type="scientific">Wolbachia pipientis wMel</name>
    <dbReference type="NCBI Taxonomy" id="163164"/>
    <lineage>
        <taxon>Bacteria</taxon>
        <taxon>Pseudomonadati</taxon>
        <taxon>Pseudomonadota</taxon>
        <taxon>Alphaproteobacteria</taxon>
        <taxon>Rickettsiales</taxon>
        <taxon>Anaplasmataceae</taxon>
        <taxon>Wolbachieae</taxon>
        <taxon>Wolbachia</taxon>
    </lineage>
</organism>
<dbReference type="EMBL" id="AE017196">
    <property type="protein sequence ID" value="AAS14150.1"/>
    <property type="molecule type" value="Genomic_DNA"/>
</dbReference>
<dbReference type="RefSeq" id="WP_010962583.1">
    <property type="nucleotide sequence ID" value="NZ_JAIUXN010000076.1"/>
</dbReference>
<dbReference type="SMR" id="Q73HW3"/>
<dbReference type="EnsemblBacteria" id="AAS14150">
    <property type="protein sequence ID" value="AAS14150"/>
    <property type="gene ID" value="WD_0427"/>
</dbReference>
<dbReference type="KEGG" id="wol:WD_0427"/>
<dbReference type="eggNOG" id="COG0356">
    <property type="taxonomic scope" value="Bacteria"/>
</dbReference>
<dbReference type="Proteomes" id="UP000008215">
    <property type="component" value="Chromosome"/>
</dbReference>
<dbReference type="GO" id="GO:0005886">
    <property type="term" value="C:plasma membrane"/>
    <property type="evidence" value="ECO:0007669"/>
    <property type="project" value="UniProtKB-SubCell"/>
</dbReference>
<dbReference type="GO" id="GO:0045259">
    <property type="term" value="C:proton-transporting ATP synthase complex"/>
    <property type="evidence" value="ECO:0007669"/>
    <property type="project" value="UniProtKB-KW"/>
</dbReference>
<dbReference type="GO" id="GO:0046933">
    <property type="term" value="F:proton-transporting ATP synthase activity, rotational mechanism"/>
    <property type="evidence" value="ECO:0007669"/>
    <property type="project" value="UniProtKB-UniRule"/>
</dbReference>
<dbReference type="CDD" id="cd00310">
    <property type="entry name" value="ATP-synt_Fo_a_6"/>
    <property type="match status" value="1"/>
</dbReference>
<dbReference type="Gene3D" id="1.20.120.220">
    <property type="entry name" value="ATP synthase, F0 complex, subunit A"/>
    <property type="match status" value="1"/>
</dbReference>
<dbReference type="HAMAP" id="MF_01393">
    <property type="entry name" value="ATP_synth_a_bact"/>
    <property type="match status" value="1"/>
</dbReference>
<dbReference type="InterPro" id="IPR000568">
    <property type="entry name" value="ATP_synth_F0_asu"/>
</dbReference>
<dbReference type="InterPro" id="IPR023011">
    <property type="entry name" value="ATP_synth_F0_asu_AS"/>
</dbReference>
<dbReference type="InterPro" id="IPR045083">
    <property type="entry name" value="ATP_synth_F0_asu_bact/mt"/>
</dbReference>
<dbReference type="InterPro" id="IPR035908">
    <property type="entry name" value="F0_ATP_A_sf"/>
</dbReference>
<dbReference type="NCBIfam" id="TIGR01131">
    <property type="entry name" value="ATP_synt_6_or_A"/>
    <property type="match status" value="1"/>
</dbReference>
<dbReference type="NCBIfam" id="NF004482">
    <property type="entry name" value="PRK05815.2-4"/>
    <property type="match status" value="1"/>
</dbReference>
<dbReference type="PANTHER" id="PTHR11410">
    <property type="entry name" value="ATP SYNTHASE SUBUNIT A"/>
    <property type="match status" value="1"/>
</dbReference>
<dbReference type="PANTHER" id="PTHR11410:SF0">
    <property type="entry name" value="ATP SYNTHASE SUBUNIT A"/>
    <property type="match status" value="1"/>
</dbReference>
<dbReference type="Pfam" id="PF00119">
    <property type="entry name" value="ATP-synt_A"/>
    <property type="match status" value="1"/>
</dbReference>
<dbReference type="PRINTS" id="PR00123">
    <property type="entry name" value="ATPASEA"/>
</dbReference>
<dbReference type="SUPFAM" id="SSF81336">
    <property type="entry name" value="F1F0 ATP synthase subunit A"/>
    <property type="match status" value="1"/>
</dbReference>
<dbReference type="PROSITE" id="PS00449">
    <property type="entry name" value="ATPASE_A"/>
    <property type="match status" value="1"/>
</dbReference>
<accession>Q73HW3</accession>